<proteinExistence type="inferred from homology"/>
<evidence type="ECO:0000255" key="1">
    <source>
        <dbReference type="HAMAP-Rule" id="MF_01454"/>
    </source>
</evidence>
<evidence type="ECO:0000255" key="2">
    <source>
        <dbReference type="PROSITE-ProRule" id="PRU01229"/>
    </source>
</evidence>
<evidence type="ECO:0000255" key="3">
    <source>
        <dbReference type="PROSITE-ProRule" id="PRU01231"/>
    </source>
</evidence>
<evidence type="ECO:0000305" key="4"/>
<organism>
    <name type="scientific">Streptococcus pyogenes serotype M3 (strain ATCC BAA-595 / MGAS315)</name>
    <dbReference type="NCBI Taxonomy" id="198466"/>
    <lineage>
        <taxon>Bacteria</taxon>
        <taxon>Bacillati</taxon>
        <taxon>Bacillota</taxon>
        <taxon>Bacilli</taxon>
        <taxon>Lactobacillales</taxon>
        <taxon>Streptococcaceae</taxon>
        <taxon>Streptococcus</taxon>
    </lineage>
</organism>
<protein>
    <recommendedName>
        <fullName evidence="1">GTPase Obg</fullName>
        <ecNumber evidence="1">3.6.5.-</ecNumber>
    </recommendedName>
    <alternativeName>
        <fullName evidence="1">GTP-binding protein Obg</fullName>
    </alternativeName>
</protein>
<name>OBG_STRP3</name>
<feature type="chain" id="PRO_0000386310" description="GTPase Obg">
    <location>
        <begin position="1"/>
        <end position="437"/>
    </location>
</feature>
<feature type="domain" description="Obg" evidence="3">
    <location>
        <begin position="2"/>
        <end position="160"/>
    </location>
</feature>
<feature type="domain" description="OBG-type G" evidence="1">
    <location>
        <begin position="161"/>
        <end position="338"/>
    </location>
</feature>
<feature type="domain" description="OCT" evidence="2">
    <location>
        <begin position="359"/>
        <end position="437"/>
    </location>
</feature>
<feature type="binding site" evidence="1">
    <location>
        <begin position="167"/>
        <end position="174"/>
    </location>
    <ligand>
        <name>GTP</name>
        <dbReference type="ChEBI" id="CHEBI:37565"/>
    </ligand>
</feature>
<feature type="binding site" evidence="1">
    <location>
        <position position="174"/>
    </location>
    <ligand>
        <name>Mg(2+)</name>
        <dbReference type="ChEBI" id="CHEBI:18420"/>
    </ligand>
</feature>
<feature type="binding site" evidence="1">
    <location>
        <begin position="192"/>
        <end position="196"/>
    </location>
    <ligand>
        <name>GTP</name>
        <dbReference type="ChEBI" id="CHEBI:37565"/>
    </ligand>
</feature>
<feature type="binding site" evidence="1">
    <location>
        <position position="194"/>
    </location>
    <ligand>
        <name>Mg(2+)</name>
        <dbReference type="ChEBI" id="CHEBI:18420"/>
    </ligand>
</feature>
<feature type="binding site" evidence="1">
    <location>
        <begin position="214"/>
        <end position="217"/>
    </location>
    <ligand>
        <name>GTP</name>
        <dbReference type="ChEBI" id="CHEBI:37565"/>
    </ligand>
</feature>
<feature type="binding site" evidence="1">
    <location>
        <begin position="284"/>
        <end position="287"/>
    </location>
    <ligand>
        <name>GTP</name>
        <dbReference type="ChEBI" id="CHEBI:37565"/>
    </ligand>
</feature>
<feature type="binding site" evidence="1">
    <location>
        <begin position="319"/>
        <end position="321"/>
    </location>
    <ligand>
        <name>GTP</name>
        <dbReference type="ChEBI" id="CHEBI:37565"/>
    </ligand>
</feature>
<keyword id="KW-0963">Cytoplasm</keyword>
<keyword id="KW-0342">GTP-binding</keyword>
<keyword id="KW-0378">Hydrolase</keyword>
<keyword id="KW-0460">Magnesium</keyword>
<keyword id="KW-0479">Metal-binding</keyword>
<keyword id="KW-0547">Nucleotide-binding</keyword>
<reference key="1">
    <citation type="journal article" date="2002" name="Proc. Natl. Acad. Sci. U.S.A.">
        <title>Genome sequence of a serotype M3 strain of group A Streptococcus: phage-encoded toxins, the high-virulence phenotype, and clone emergence.</title>
        <authorList>
            <person name="Beres S.B."/>
            <person name="Sylva G.L."/>
            <person name="Barbian K.D."/>
            <person name="Lei B."/>
            <person name="Hoff J.S."/>
            <person name="Mammarella N.D."/>
            <person name="Liu M.-Y."/>
            <person name="Smoot J.C."/>
            <person name="Porcella S.F."/>
            <person name="Parkins L.D."/>
            <person name="Campbell D.S."/>
            <person name="Smith T.M."/>
            <person name="McCormick J.K."/>
            <person name="Leung D.Y.M."/>
            <person name="Schlievert P.M."/>
            <person name="Musser J.M."/>
        </authorList>
    </citation>
    <scope>NUCLEOTIDE SEQUENCE [LARGE SCALE GENOMIC DNA]</scope>
    <source>
        <strain>ATCC BAA-595 / MGAS315</strain>
    </source>
</reference>
<sequence length="437" mass="48356">MSMFLDTAKISVQAGRGGDGMVAFRREKYVPNGGPWGGDGGKGGSVIFRVDEGLRTLMDFRYNRKFKAKSGEKGMTKGMHGRGAEDLIVFVPQGTTVRDAETGKVITDLVEHGQEVVIAKGGRGGRGNIRFATPRNPAPEIAENGEPGEERQLELELKILADVGLVGFPSVGKSTLLSVVSSAKPKIGAYHFTTIVPNLGMVRTKSGDSFAMADLPGLIEGASQGVGLGTQFLRHIERTRVILHVIDMSASEGRDPYEDYVSINNELETYNLRLMERPQIIVANKMDMPEAQDNLKAFKKKLATQYDEFNDLPMIFSISSLAHQGLENLLEATAELLAKTDEFLLYDESDLVDEEAYYGFAEAEKEFEITRDDDATWVLSGEKLERLFVMTNMERDESIMKFARQLRGMGVDEALRERGAKDGDLVRIGKFEFEFVD</sequence>
<dbReference type="EC" id="3.6.5.-" evidence="1"/>
<dbReference type="EMBL" id="AE014074">
    <property type="protein sequence ID" value="AAM79617.1"/>
    <property type="status" value="ALT_INIT"/>
    <property type="molecule type" value="Genomic_DNA"/>
</dbReference>
<dbReference type="SMR" id="P0DB52"/>
<dbReference type="KEGG" id="spg:SpyM3_1010"/>
<dbReference type="HOGENOM" id="CLU_011747_2_1_9"/>
<dbReference type="Proteomes" id="UP000000564">
    <property type="component" value="Chromosome"/>
</dbReference>
<dbReference type="GO" id="GO:0005737">
    <property type="term" value="C:cytoplasm"/>
    <property type="evidence" value="ECO:0007669"/>
    <property type="project" value="UniProtKB-SubCell"/>
</dbReference>
<dbReference type="GO" id="GO:0005525">
    <property type="term" value="F:GTP binding"/>
    <property type="evidence" value="ECO:0007669"/>
    <property type="project" value="UniProtKB-UniRule"/>
</dbReference>
<dbReference type="GO" id="GO:0003924">
    <property type="term" value="F:GTPase activity"/>
    <property type="evidence" value="ECO:0007669"/>
    <property type="project" value="UniProtKB-UniRule"/>
</dbReference>
<dbReference type="GO" id="GO:0000287">
    <property type="term" value="F:magnesium ion binding"/>
    <property type="evidence" value="ECO:0007669"/>
    <property type="project" value="InterPro"/>
</dbReference>
<dbReference type="GO" id="GO:0042254">
    <property type="term" value="P:ribosome biogenesis"/>
    <property type="evidence" value="ECO:0007669"/>
    <property type="project" value="UniProtKB-UniRule"/>
</dbReference>
<dbReference type="CDD" id="cd01898">
    <property type="entry name" value="Obg"/>
    <property type="match status" value="1"/>
</dbReference>
<dbReference type="FunFam" id="2.70.210.12:FF:000001">
    <property type="entry name" value="GTPase Obg"/>
    <property type="match status" value="1"/>
</dbReference>
<dbReference type="FunFam" id="3.40.50.300:FF:000515">
    <property type="entry name" value="GTPase Obg"/>
    <property type="match status" value="1"/>
</dbReference>
<dbReference type="Gene3D" id="3.30.300.350">
    <property type="entry name" value="GTP-binding protein OBG, C-terminal domain"/>
    <property type="match status" value="1"/>
</dbReference>
<dbReference type="Gene3D" id="2.70.210.12">
    <property type="entry name" value="GTP1/OBG domain"/>
    <property type="match status" value="1"/>
</dbReference>
<dbReference type="Gene3D" id="3.40.50.300">
    <property type="entry name" value="P-loop containing nucleotide triphosphate hydrolases"/>
    <property type="match status" value="1"/>
</dbReference>
<dbReference type="HAMAP" id="MF_01454">
    <property type="entry name" value="GTPase_Obg"/>
    <property type="match status" value="1"/>
</dbReference>
<dbReference type="InterPro" id="IPR031167">
    <property type="entry name" value="G_OBG"/>
</dbReference>
<dbReference type="InterPro" id="IPR006073">
    <property type="entry name" value="GTP-bd"/>
</dbReference>
<dbReference type="InterPro" id="IPR014100">
    <property type="entry name" value="GTP-bd_Obg/CgtA"/>
</dbReference>
<dbReference type="InterPro" id="IPR036346">
    <property type="entry name" value="GTP-bd_prot_GTP1/OBG_C_sf"/>
</dbReference>
<dbReference type="InterPro" id="IPR006074">
    <property type="entry name" value="GTP1-OBG_CS"/>
</dbReference>
<dbReference type="InterPro" id="IPR006169">
    <property type="entry name" value="GTP1_OBG_dom"/>
</dbReference>
<dbReference type="InterPro" id="IPR036726">
    <property type="entry name" value="GTP1_OBG_dom_sf"/>
</dbReference>
<dbReference type="InterPro" id="IPR045086">
    <property type="entry name" value="OBG_GTPase"/>
</dbReference>
<dbReference type="InterPro" id="IPR015349">
    <property type="entry name" value="OCT_dom"/>
</dbReference>
<dbReference type="InterPro" id="IPR027417">
    <property type="entry name" value="P-loop_NTPase"/>
</dbReference>
<dbReference type="InterPro" id="IPR005225">
    <property type="entry name" value="Small_GTP-bd"/>
</dbReference>
<dbReference type="NCBIfam" id="TIGR02729">
    <property type="entry name" value="Obg_CgtA"/>
    <property type="match status" value="1"/>
</dbReference>
<dbReference type="NCBIfam" id="TIGR03595">
    <property type="entry name" value="Obg_CgtA_exten"/>
    <property type="match status" value="1"/>
</dbReference>
<dbReference type="NCBIfam" id="NF008954">
    <property type="entry name" value="PRK12296.1"/>
    <property type="match status" value="1"/>
</dbReference>
<dbReference type="NCBIfam" id="NF008955">
    <property type="entry name" value="PRK12297.1"/>
    <property type="match status" value="1"/>
</dbReference>
<dbReference type="NCBIfam" id="NF008956">
    <property type="entry name" value="PRK12299.1"/>
    <property type="match status" value="1"/>
</dbReference>
<dbReference type="NCBIfam" id="TIGR00231">
    <property type="entry name" value="small_GTP"/>
    <property type="match status" value="1"/>
</dbReference>
<dbReference type="PANTHER" id="PTHR11702">
    <property type="entry name" value="DEVELOPMENTALLY REGULATED GTP-BINDING PROTEIN-RELATED"/>
    <property type="match status" value="1"/>
</dbReference>
<dbReference type="PANTHER" id="PTHR11702:SF31">
    <property type="entry name" value="MITOCHONDRIAL RIBOSOME-ASSOCIATED GTPASE 2"/>
    <property type="match status" value="1"/>
</dbReference>
<dbReference type="Pfam" id="PF09269">
    <property type="entry name" value="DUF1967"/>
    <property type="match status" value="1"/>
</dbReference>
<dbReference type="Pfam" id="PF01018">
    <property type="entry name" value="GTP1_OBG"/>
    <property type="match status" value="1"/>
</dbReference>
<dbReference type="Pfam" id="PF01926">
    <property type="entry name" value="MMR_HSR1"/>
    <property type="match status" value="1"/>
</dbReference>
<dbReference type="PIRSF" id="PIRSF002401">
    <property type="entry name" value="GTP_bd_Obg/CgtA"/>
    <property type="match status" value="1"/>
</dbReference>
<dbReference type="PRINTS" id="PR00326">
    <property type="entry name" value="GTP1OBG"/>
</dbReference>
<dbReference type="SUPFAM" id="SSF102741">
    <property type="entry name" value="Obg GTP-binding protein C-terminal domain"/>
    <property type="match status" value="1"/>
</dbReference>
<dbReference type="SUPFAM" id="SSF82051">
    <property type="entry name" value="Obg GTP-binding protein N-terminal domain"/>
    <property type="match status" value="1"/>
</dbReference>
<dbReference type="SUPFAM" id="SSF52540">
    <property type="entry name" value="P-loop containing nucleoside triphosphate hydrolases"/>
    <property type="match status" value="1"/>
</dbReference>
<dbReference type="PROSITE" id="PS51710">
    <property type="entry name" value="G_OBG"/>
    <property type="match status" value="1"/>
</dbReference>
<dbReference type="PROSITE" id="PS00905">
    <property type="entry name" value="GTP1_OBG"/>
    <property type="match status" value="1"/>
</dbReference>
<dbReference type="PROSITE" id="PS51883">
    <property type="entry name" value="OBG"/>
    <property type="match status" value="1"/>
</dbReference>
<dbReference type="PROSITE" id="PS51881">
    <property type="entry name" value="OCT"/>
    <property type="match status" value="1"/>
</dbReference>
<accession>P0DB52</accession>
<accession>Q878V6</accession>
<accession>Q8K733</accession>
<gene>
    <name evidence="1" type="primary">obg</name>
    <name type="ordered locus">SpyM3_1010</name>
</gene>
<comment type="function">
    <text evidence="1">An essential GTPase which binds GTP, GDP and possibly (p)ppGpp with moderate affinity, with high nucleotide exchange rates and a fairly low GTP hydrolysis rate. Plays a role in control of the cell cycle, stress response, ribosome biogenesis and in those bacteria that undergo differentiation, in morphogenesis control.</text>
</comment>
<comment type="cofactor">
    <cofactor evidence="1">
        <name>Mg(2+)</name>
        <dbReference type="ChEBI" id="CHEBI:18420"/>
    </cofactor>
</comment>
<comment type="subunit">
    <text evidence="1">Monomer.</text>
</comment>
<comment type="subcellular location">
    <subcellularLocation>
        <location evidence="1">Cytoplasm</location>
    </subcellularLocation>
</comment>
<comment type="similarity">
    <text evidence="1">Belongs to the TRAFAC class OBG-HflX-like GTPase superfamily. OBG GTPase family.</text>
</comment>
<comment type="sequence caution" evidence="4">
    <conflict type="erroneous initiation">
        <sequence resource="EMBL-CDS" id="AAM79617"/>
    </conflict>
    <text>Truncated N-terminus.</text>
</comment>